<comment type="function">
    <text evidence="1">Prevents the cell division inhibition by proteins MinC and MinD at internal division sites while permitting inhibition at polar sites. This ensures cell division at the proper site by restricting the formation of a division septum at the midpoint of the long axis of the cell.</text>
</comment>
<comment type="similarity">
    <text evidence="1">Belongs to the MinE family.</text>
</comment>
<feature type="chain" id="PRO_0000298146" description="Cell division topological specificity factor">
    <location>
        <begin position="1"/>
        <end position="86"/>
    </location>
</feature>
<sequence length="86" mass="9839">MASFLSFLLGEKKQTASVAKERLQIILAHERTGRSHKPDYLPALQRDLIAVIAKYIHINPNDIKLHLERQDNLDVLEVKIELPDAK</sequence>
<organism>
    <name type="scientific">Polaromonas sp. (strain JS666 / ATCC BAA-500)</name>
    <dbReference type="NCBI Taxonomy" id="296591"/>
    <lineage>
        <taxon>Bacteria</taxon>
        <taxon>Pseudomonadati</taxon>
        <taxon>Pseudomonadota</taxon>
        <taxon>Betaproteobacteria</taxon>
        <taxon>Burkholderiales</taxon>
        <taxon>Comamonadaceae</taxon>
        <taxon>Polaromonas</taxon>
    </lineage>
</organism>
<reference key="1">
    <citation type="journal article" date="2008" name="Appl. Environ. Microbiol.">
        <title>The genome of Polaromonas sp. strain JS666: insights into the evolution of a hydrocarbon- and xenobiotic-degrading bacterium, and features of relevance to biotechnology.</title>
        <authorList>
            <person name="Mattes T.E."/>
            <person name="Alexander A.K."/>
            <person name="Richardson P.M."/>
            <person name="Munk A.C."/>
            <person name="Han C.S."/>
            <person name="Stothard P."/>
            <person name="Coleman N.V."/>
        </authorList>
    </citation>
    <scope>NUCLEOTIDE SEQUENCE [LARGE SCALE GENOMIC DNA]</scope>
    <source>
        <strain>JS666 / ATCC BAA-500</strain>
    </source>
</reference>
<name>MINE_POLSJ</name>
<accession>Q12HK7</accession>
<evidence type="ECO:0000255" key="1">
    <source>
        <dbReference type="HAMAP-Rule" id="MF_00262"/>
    </source>
</evidence>
<protein>
    <recommendedName>
        <fullName evidence="1">Cell division topological specificity factor</fullName>
    </recommendedName>
</protein>
<proteinExistence type="inferred from homology"/>
<keyword id="KW-0131">Cell cycle</keyword>
<keyword id="KW-0132">Cell division</keyword>
<keyword id="KW-1185">Reference proteome</keyword>
<gene>
    <name evidence="1" type="primary">minE</name>
    <name type="ordered locus">Bpro_0018</name>
</gene>
<dbReference type="EMBL" id="CP000316">
    <property type="protein sequence ID" value="ABE41985.1"/>
    <property type="molecule type" value="Genomic_DNA"/>
</dbReference>
<dbReference type="RefSeq" id="WP_011480995.1">
    <property type="nucleotide sequence ID" value="NC_007948.1"/>
</dbReference>
<dbReference type="SMR" id="Q12HK7"/>
<dbReference type="STRING" id="296591.Bpro_0018"/>
<dbReference type="KEGG" id="pol:Bpro_0018"/>
<dbReference type="eggNOG" id="COG0851">
    <property type="taxonomic scope" value="Bacteria"/>
</dbReference>
<dbReference type="HOGENOM" id="CLU_137929_2_1_4"/>
<dbReference type="OrthoDB" id="9802655at2"/>
<dbReference type="Proteomes" id="UP000001983">
    <property type="component" value="Chromosome"/>
</dbReference>
<dbReference type="GO" id="GO:0051301">
    <property type="term" value="P:cell division"/>
    <property type="evidence" value="ECO:0007669"/>
    <property type="project" value="UniProtKB-KW"/>
</dbReference>
<dbReference type="GO" id="GO:0032955">
    <property type="term" value="P:regulation of division septum assembly"/>
    <property type="evidence" value="ECO:0007669"/>
    <property type="project" value="InterPro"/>
</dbReference>
<dbReference type="FunFam" id="3.30.1070.10:FF:000001">
    <property type="entry name" value="Cell division topological specificity factor"/>
    <property type="match status" value="1"/>
</dbReference>
<dbReference type="Gene3D" id="3.30.1070.10">
    <property type="entry name" value="Cell division topological specificity factor MinE"/>
    <property type="match status" value="1"/>
</dbReference>
<dbReference type="HAMAP" id="MF_00262">
    <property type="entry name" value="MinE"/>
    <property type="match status" value="1"/>
</dbReference>
<dbReference type="InterPro" id="IPR005527">
    <property type="entry name" value="MinE"/>
</dbReference>
<dbReference type="InterPro" id="IPR036707">
    <property type="entry name" value="MinE_sf"/>
</dbReference>
<dbReference type="NCBIfam" id="TIGR01215">
    <property type="entry name" value="minE"/>
    <property type="match status" value="1"/>
</dbReference>
<dbReference type="NCBIfam" id="NF001422">
    <property type="entry name" value="PRK00296.1"/>
    <property type="match status" value="1"/>
</dbReference>
<dbReference type="NCBIfam" id="NF010595">
    <property type="entry name" value="PRK13989.1"/>
    <property type="match status" value="1"/>
</dbReference>
<dbReference type="Pfam" id="PF03776">
    <property type="entry name" value="MinE"/>
    <property type="match status" value="1"/>
</dbReference>
<dbReference type="SUPFAM" id="SSF55229">
    <property type="entry name" value="Cell division protein MinE topological specificity domain"/>
    <property type="match status" value="1"/>
</dbReference>